<name>PA2HB_CALRH</name>
<proteinExistence type="evidence at transcript level"/>
<organism>
    <name type="scientific">Calloselasma rhodostoma</name>
    <name type="common">Malayan pit viper</name>
    <name type="synonym">Agkistrodon rhodostoma</name>
    <dbReference type="NCBI Taxonomy" id="8717"/>
    <lineage>
        <taxon>Eukaryota</taxon>
        <taxon>Metazoa</taxon>
        <taxon>Chordata</taxon>
        <taxon>Craniata</taxon>
        <taxon>Vertebrata</taxon>
        <taxon>Euteleostomi</taxon>
        <taxon>Lepidosauria</taxon>
        <taxon>Squamata</taxon>
        <taxon>Bifurcata</taxon>
        <taxon>Unidentata</taxon>
        <taxon>Episquamata</taxon>
        <taxon>Toxicofera</taxon>
        <taxon>Serpentes</taxon>
        <taxon>Colubroidea</taxon>
        <taxon>Viperidae</taxon>
        <taxon>Crotalinae</taxon>
        <taxon>Calloselasma</taxon>
    </lineage>
</organism>
<protein>
    <recommendedName>
        <fullName>Basic phospholipase A2 homolog G6K49</fullName>
        <shortName>svPLA2 homolog</shortName>
    </recommendedName>
    <alternativeName>
        <fullName>CRV/TMV/DAV-K49</fullName>
    </alternativeName>
</protein>
<comment type="function">
    <text evidence="1 3">Snake venom phospholipase A2 (PLA2) that lacks enzymatic activity. Displays myotoxic activities (By similarity). A model of myotoxic mechanism has been proposed: an apo Lys49-PLA2 is activated by the entrance of a hydrophobic molecule (e.g. fatty acid) at the hydrophobic channel of the protein leading to a reorientation of a monomer (By similarity). This reorientation causes a transition between 'inactive' to 'active' states, causing alignment of C-terminal and membrane-docking sites (MDoS) side-by-side and putting the membrane-disruption sites (MDiS) in the same plane, exposed to solvent and in a symmetric position for both monomers (By similarity). The MDoS region stabilizes the toxin on membrane by the interaction of charged residues with phospholipid head groups (By similarity). Subsequently, the MDiS region destabilizes the membrane with penetration of hydrophobic residues (By similarity). This insertion causes a disorganization of the membrane, allowing an uncontrolled influx of ions (i.e. calcium and sodium), and eventually triggering irreversible intracellular alterations and cell death (By similarity).</text>
</comment>
<comment type="subunit">
    <text evidence="3">Homodimer; non-covalently linked.</text>
</comment>
<comment type="subcellular location">
    <subcellularLocation>
        <location evidence="7">Secreted</location>
    </subcellularLocation>
</comment>
<comment type="tissue specificity">
    <text evidence="7">Expressed by the venom gland.</text>
</comment>
<comment type="similarity">
    <text evidence="6">Belongs to the phospholipase A2 family. Group II subfamily. K49 sub-subfamily.</text>
</comment>
<comment type="caution">
    <text evidence="6">Does not bind calcium as one of the calcium-binding sites is lost (Asp-&gt;Lys in position 64, which corresponds to 'Lys-49' in the current nomenclature).</text>
</comment>
<keyword id="KW-1015">Disulfide bond</keyword>
<keyword id="KW-0959">Myotoxin</keyword>
<keyword id="KW-0964">Secreted</keyword>
<keyword id="KW-0732">Signal</keyword>
<keyword id="KW-0800">Toxin</keyword>
<sequence>MRTLWIMAVLLLGVEGSLIELGKMIFQETGKNPVKNYGLYGCNCGVGNRGKPVDATDRCCFVHKCCYKKVTGCDPKKDRYSYSWENKAIVCGEKNPPCLKQVCECDKAVAICLRENLGTYDKKHRVTVKFLCKAPESC</sequence>
<accession>Q9PVF3</accession>
<evidence type="ECO:0000250" key="1">
    <source>
        <dbReference type="UniProtKB" id="I6L8L6"/>
    </source>
</evidence>
<evidence type="ECO:0000250" key="2">
    <source>
        <dbReference type="UniProtKB" id="P24605"/>
    </source>
</evidence>
<evidence type="ECO:0000250" key="3">
    <source>
        <dbReference type="UniProtKB" id="Q2PWA3"/>
    </source>
</evidence>
<evidence type="ECO:0000250" key="4">
    <source>
        <dbReference type="UniProtKB" id="Q90249"/>
    </source>
</evidence>
<evidence type="ECO:0000255" key="5"/>
<evidence type="ECO:0000305" key="6"/>
<evidence type="ECO:0000305" key="7">
    <source>
    </source>
</evidence>
<feature type="signal peptide" evidence="5">
    <location>
        <begin position="1"/>
        <end position="16"/>
    </location>
</feature>
<feature type="chain" id="PRO_0000022782" description="Basic phospholipase A2 homolog G6K49">
    <location>
        <begin position="17"/>
        <end position="138"/>
    </location>
</feature>
<feature type="region of interest" description="Important for membrane-damaging activities in eukaryotes and bacteria; heparin-binding" evidence="2">
    <location>
        <begin position="122"/>
        <end position="133"/>
    </location>
</feature>
<feature type="site" description="Important residue of the cationic membrane-docking site (MDoS)" evidence="1">
    <location>
        <position position="122"/>
    </location>
</feature>
<feature type="site" description="Important residue of the cationic membrane-docking site (MDoS)" evidence="1">
    <location>
        <position position="125"/>
    </location>
</feature>
<feature type="site" description="Hydrophobic membrane-disruption site (MDiS)" evidence="1">
    <location>
        <position position="128"/>
    </location>
</feature>
<feature type="site" description="Cationic membrane-docking site (MDoS)" evidence="1">
    <location>
        <position position="129"/>
    </location>
</feature>
<feature type="site" description="Hydrophobic membrane-disruption site (MDiS)" evidence="1">
    <location>
        <position position="131"/>
    </location>
</feature>
<feature type="disulfide bond" evidence="4">
    <location>
        <begin position="42"/>
        <end position="132"/>
    </location>
</feature>
<feature type="disulfide bond" evidence="4">
    <location>
        <begin position="44"/>
        <end position="60"/>
    </location>
</feature>
<feature type="disulfide bond" evidence="4">
    <location>
        <begin position="59"/>
        <end position="112"/>
    </location>
</feature>
<feature type="disulfide bond" evidence="4">
    <location>
        <begin position="65"/>
        <end position="138"/>
    </location>
</feature>
<feature type="disulfide bond" evidence="4">
    <location>
        <begin position="66"/>
        <end position="105"/>
    </location>
</feature>
<feature type="disulfide bond" evidence="4">
    <location>
        <begin position="73"/>
        <end position="98"/>
    </location>
</feature>
<feature type="disulfide bond" evidence="4">
    <location>
        <begin position="91"/>
        <end position="103"/>
    </location>
</feature>
<reference key="1">
    <citation type="journal article" date="2000" name="Eur. J. Biochem.">
        <title>Phospholipases A2 from Callosellasma rhodostoma venom gland. Cloning and sequencing of 10 of the cDNAs, three-dimensional modelling and chemical modification of the major isozyme.</title>
        <authorList>
            <person name="Tsai I.-H."/>
            <person name="Wang Y.-M."/>
            <person name="Au L.-C."/>
            <person name="Ko T.-P."/>
            <person name="Chen Y.-H."/>
            <person name="Chu Y.-F."/>
        </authorList>
    </citation>
    <scope>NUCLEOTIDE SEQUENCE [MRNA]</scope>
    <source>
        <tissue>Venom gland</tissue>
    </source>
</reference>
<dbReference type="EMBL" id="AF104066">
    <property type="protein sequence ID" value="AAF03250.1"/>
    <property type="molecule type" value="mRNA"/>
</dbReference>
<dbReference type="SMR" id="Q9PVF3"/>
<dbReference type="GO" id="GO:0005576">
    <property type="term" value="C:extracellular region"/>
    <property type="evidence" value="ECO:0007669"/>
    <property type="project" value="UniProtKB-SubCell"/>
</dbReference>
<dbReference type="GO" id="GO:0005509">
    <property type="term" value="F:calcium ion binding"/>
    <property type="evidence" value="ECO:0007669"/>
    <property type="project" value="InterPro"/>
</dbReference>
<dbReference type="GO" id="GO:0047498">
    <property type="term" value="F:calcium-dependent phospholipase A2 activity"/>
    <property type="evidence" value="ECO:0007669"/>
    <property type="project" value="TreeGrafter"/>
</dbReference>
<dbReference type="GO" id="GO:0005543">
    <property type="term" value="F:phospholipid binding"/>
    <property type="evidence" value="ECO:0007669"/>
    <property type="project" value="TreeGrafter"/>
</dbReference>
<dbReference type="GO" id="GO:0090729">
    <property type="term" value="F:toxin activity"/>
    <property type="evidence" value="ECO:0007669"/>
    <property type="project" value="UniProtKB-KW"/>
</dbReference>
<dbReference type="GO" id="GO:0050482">
    <property type="term" value="P:arachidonate secretion"/>
    <property type="evidence" value="ECO:0007669"/>
    <property type="project" value="InterPro"/>
</dbReference>
<dbReference type="GO" id="GO:0016042">
    <property type="term" value="P:lipid catabolic process"/>
    <property type="evidence" value="ECO:0007669"/>
    <property type="project" value="InterPro"/>
</dbReference>
<dbReference type="GO" id="GO:0006644">
    <property type="term" value="P:phospholipid metabolic process"/>
    <property type="evidence" value="ECO:0007669"/>
    <property type="project" value="InterPro"/>
</dbReference>
<dbReference type="CDD" id="cd00125">
    <property type="entry name" value="PLA2c"/>
    <property type="match status" value="1"/>
</dbReference>
<dbReference type="FunFam" id="1.20.90.10:FF:000001">
    <property type="entry name" value="Basic phospholipase A2 homolog"/>
    <property type="match status" value="1"/>
</dbReference>
<dbReference type="Gene3D" id="1.20.90.10">
    <property type="entry name" value="Phospholipase A2 domain"/>
    <property type="match status" value="1"/>
</dbReference>
<dbReference type="InterPro" id="IPR001211">
    <property type="entry name" value="PLipase_A2"/>
</dbReference>
<dbReference type="InterPro" id="IPR033112">
    <property type="entry name" value="PLipase_A2_Asp_AS"/>
</dbReference>
<dbReference type="InterPro" id="IPR016090">
    <property type="entry name" value="PLipase_A2_dom"/>
</dbReference>
<dbReference type="InterPro" id="IPR036444">
    <property type="entry name" value="PLipase_A2_dom_sf"/>
</dbReference>
<dbReference type="InterPro" id="IPR033113">
    <property type="entry name" value="PLipase_A2_His_AS"/>
</dbReference>
<dbReference type="PANTHER" id="PTHR11716:SF101">
    <property type="entry name" value="BASIC PHOSPHOLIPASE A2 PA-11-LIKE"/>
    <property type="match status" value="1"/>
</dbReference>
<dbReference type="PANTHER" id="PTHR11716">
    <property type="entry name" value="PHOSPHOLIPASE A2 FAMILY MEMBER"/>
    <property type="match status" value="1"/>
</dbReference>
<dbReference type="Pfam" id="PF00068">
    <property type="entry name" value="Phospholip_A2_1"/>
    <property type="match status" value="1"/>
</dbReference>
<dbReference type="PRINTS" id="PR00389">
    <property type="entry name" value="PHPHLIPASEA2"/>
</dbReference>
<dbReference type="SMART" id="SM00085">
    <property type="entry name" value="PA2c"/>
    <property type="match status" value="1"/>
</dbReference>
<dbReference type="SUPFAM" id="SSF48619">
    <property type="entry name" value="Phospholipase A2, PLA2"/>
    <property type="match status" value="1"/>
</dbReference>
<dbReference type="PROSITE" id="PS00119">
    <property type="entry name" value="PA2_ASP"/>
    <property type="match status" value="1"/>
</dbReference>
<dbReference type="PROSITE" id="PS00118">
    <property type="entry name" value="PA2_HIS"/>
    <property type="match status" value="1"/>
</dbReference>